<organism>
    <name type="scientific">Mycobacterium tuberculosis (strain CDC 1551 / Oshkosh)</name>
    <dbReference type="NCBI Taxonomy" id="83331"/>
    <lineage>
        <taxon>Bacteria</taxon>
        <taxon>Bacillati</taxon>
        <taxon>Actinomycetota</taxon>
        <taxon>Actinomycetes</taxon>
        <taxon>Mycobacteriales</taxon>
        <taxon>Mycobacteriaceae</taxon>
        <taxon>Mycobacterium</taxon>
        <taxon>Mycobacterium tuberculosis complex</taxon>
    </lineage>
</organism>
<evidence type="ECO:0000250" key="1">
    <source>
        <dbReference type="UniProtKB" id="P9WFK7"/>
    </source>
</evidence>
<evidence type="ECO:0000255" key="2">
    <source>
        <dbReference type="HAMAP-Rule" id="MF_01812"/>
    </source>
</evidence>
<evidence type="ECO:0000305" key="3"/>
<accession>P9WFK6</accession>
<accession>L0TCA0</accession>
<accession>P71727</accession>
<accession>Q9RG79</accession>
<comment type="function">
    <text evidence="1">Effector that is released into the host cell and affects host immune responses; it negatively modulates inflammation, macrophage autophagy, and cell death through redox-dependent signaling. Acts as an acetyltransferase. Acetylates 'Lys-55' of dual-specificity protein phosphatase 16 (DUSP16)/mitogen-activated protein kinase phosphatase-7 (MKP-7), a JNK-specific phosphatase; this leads to the inhibition of JNK-dependent autophagy, phagosome maturation, and ROS (reactive oxygen species) generation for enhanced intracellular survival of M.tuberculosis. Inhibits Con A-mediated T-cell proliferation in vitro. Treatment of T-cells with Eis inhibits ERK1/2, JAK pathway, and subsequent production of tumor necrosis factor-alpha (TNF-alpha) and interleukin-4 (IL-4); on the contrary, there is increased production of interferon-gamma (IFN-gamma) and interleukin-10 (IL-10), which indicates that immunity in response to Eis treatment is skewed away from a protective T(H)1 response and Eis disturbs the cross regulation of T-cells. When expressed in M.smegmatis, enhances intracellular survival of the bacteria in host macrophages during infection.</text>
</comment>
<comment type="function">
    <text evidence="1">Can also acetylate multiple amine groups of many aminoglycoside (AG) antibiotics, leading to their inactivation, and thus contributes to drug resistance. Is also able to acetylate and deactivate the cyclic peptide antibiotic capreomycin, but not the other anti-tuberculous drugs isoniazid and pyrazinamide. Acetylates kanamycin (KAN) more efficiently than amikacin (AMK), even though Eis seems to bind AMK with higher affinity. Does not acetylate and inactivate streptomycin, apramycin and spectinomycin.</text>
</comment>
<comment type="catalytic activity">
    <reaction evidence="1">
        <text>L-lysyl-[protein] + acetyl-CoA = N(6)-acetyl-L-lysyl-[protein] + CoA + H(+)</text>
        <dbReference type="Rhea" id="RHEA:45948"/>
        <dbReference type="Rhea" id="RHEA-COMP:9752"/>
        <dbReference type="Rhea" id="RHEA-COMP:10731"/>
        <dbReference type="ChEBI" id="CHEBI:15378"/>
        <dbReference type="ChEBI" id="CHEBI:29969"/>
        <dbReference type="ChEBI" id="CHEBI:57287"/>
        <dbReference type="ChEBI" id="CHEBI:57288"/>
        <dbReference type="ChEBI" id="CHEBI:61930"/>
    </reaction>
</comment>
<comment type="activity regulation">
    <text evidence="1">Is potently inhibited by several small-molecule that share an isothiazole S,S-dioxide heterocyclic core. Some of these inhibitors, when used in combination with KAN against resistant M.tuberculosis, efficiently overcome Eis-mediated KAN resistance by restoring the antibacterial activity of KAN.</text>
</comment>
<comment type="subunit">
    <text evidence="1">Homohexamer; trimer of dimers.</text>
</comment>
<comment type="subcellular location">
    <subcellularLocation>
        <location evidence="1">Secreted</location>
    </subcellularLocation>
    <subcellularLocation>
        <location evidence="1">Host cytoplasmic vesicle</location>
        <location evidence="1">Host phagosome</location>
    </subcellularLocation>
    <subcellularLocation>
        <location evidence="1">Extracellular vesicle</location>
        <location evidence="1">Bacterial extracellular vesicle</location>
    </subcellularLocation>
    <subcellularLocation>
        <location evidence="1">Host extracellular space</location>
    </subcellularLocation>
    <text evidence="1">Eis is present in the macrophage cytoplasm from 4 to 96 hours post-infection.</text>
</comment>
<comment type="domain">
    <text evidence="1">The Eis monomer consists of three regions that are assembled into a heart-shaped molecule. This shape is formed by an unusual fusion of two general control non-derepressible 5 (GCN5)-related N-acetyltransferase (GNAT) regions and a C-terminal region. The N-acetyltransferase domain of Eis is responsible for its modulation of ROS generation and pro-inflammatory responses in macrophages.</text>
</comment>
<comment type="miscellaneous">
    <text evidence="1">Increased expression of eis due to point mutations in the promoter region of eis is responsible for resistance to the second-line injectable drug kanamycin in a number of M.tuberculosis clinical isolates, through acetylation of its amino groups, which leads to inactivation of the drug.</text>
</comment>
<comment type="similarity">
    <text evidence="2">Belongs to the acetyltransferase Eis family.</text>
</comment>
<comment type="sequence caution" evidence="3">
    <conflict type="erroneous initiation">
        <sequence resource="EMBL-CDS" id="AAK46786"/>
    </conflict>
    <text>Truncated N-terminus.</text>
</comment>
<protein>
    <recommendedName>
        <fullName evidence="2">N-acetyltransferase Eis</fullName>
        <ecNumber evidence="2">2.3.1.-</ecNumber>
    </recommendedName>
    <alternativeName>
        <fullName>Aminoglycoside N-acetyltransferase</fullName>
    </alternativeName>
    <alternativeName>
        <fullName evidence="2">Enhanced intracellular survival protein</fullName>
    </alternativeName>
    <alternativeName>
        <fullName evidence="2">Protein-lysine N-acetyltransferase</fullName>
    </alternativeName>
</protein>
<name>EIS_MYCTO</name>
<reference key="1">
    <citation type="journal article" date="2002" name="J. Bacteriol.">
        <title>Whole-genome comparison of Mycobacterium tuberculosis clinical and laboratory strains.</title>
        <authorList>
            <person name="Fleischmann R.D."/>
            <person name="Alland D."/>
            <person name="Eisen J.A."/>
            <person name="Carpenter L."/>
            <person name="White O."/>
            <person name="Peterson J.D."/>
            <person name="DeBoy R.T."/>
            <person name="Dodson R.J."/>
            <person name="Gwinn M.L."/>
            <person name="Haft D.H."/>
            <person name="Hickey E.K."/>
            <person name="Kolonay J.F."/>
            <person name="Nelson W.C."/>
            <person name="Umayam L.A."/>
            <person name="Ermolaeva M.D."/>
            <person name="Salzberg S.L."/>
            <person name="Delcher A."/>
            <person name="Utterback T.R."/>
            <person name="Weidman J.F."/>
            <person name="Khouri H.M."/>
            <person name="Gill J."/>
            <person name="Mikula A."/>
            <person name="Bishai W."/>
            <person name="Jacobs W.R. Jr."/>
            <person name="Venter J.C."/>
            <person name="Fraser C.M."/>
        </authorList>
    </citation>
    <scope>NUCLEOTIDE SEQUENCE [LARGE SCALE GENOMIC DNA]</scope>
    <source>
        <strain>CDC 1551 / Oshkosh</strain>
    </source>
</reference>
<dbReference type="EC" id="2.3.1.-" evidence="2"/>
<dbReference type="EMBL" id="AE000516">
    <property type="protein sequence ID" value="AAK46786.1"/>
    <property type="status" value="ALT_INIT"/>
    <property type="molecule type" value="Genomic_DNA"/>
</dbReference>
<dbReference type="PIR" id="C70685">
    <property type="entry name" value="C70685"/>
</dbReference>
<dbReference type="SMR" id="P9WFK6"/>
<dbReference type="KEGG" id="mtc:MT2489"/>
<dbReference type="HOGENOM" id="CLU_050659_0_0_11"/>
<dbReference type="Proteomes" id="UP000001020">
    <property type="component" value="Chromosome"/>
</dbReference>
<dbReference type="GO" id="GO:0097691">
    <property type="term" value="C:bacterial extracellular vesicle"/>
    <property type="evidence" value="ECO:0007669"/>
    <property type="project" value="UniProtKB-SubCell"/>
</dbReference>
<dbReference type="GO" id="GO:0044161">
    <property type="term" value="C:host cell cytoplasmic vesicle"/>
    <property type="evidence" value="ECO:0007669"/>
    <property type="project" value="UniProtKB-SubCell"/>
</dbReference>
<dbReference type="GO" id="GO:0043655">
    <property type="term" value="C:host extracellular space"/>
    <property type="evidence" value="ECO:0007669"/>
    <property type="project" value="UniProtKB-SubCell"/>
</dbReference>
<dbReference type="GO" id="GO:0034069">
    <property type="term" value="F:aminoglycoside N-acetyltransferase activity"/>
    <property type="evidence" value="ECO:0007669"/>
    <property type="project" value="TreeGrafter"/>
</dbReference>
<dbReference type="GO" id="GO:0061733">
    <property type="term" value="F:protein-lysine-acetyltransferase activity"/>
    <property type="evidence" value="ECO:0007669"/>
    <property type="project" value="RHEA"/>
</dbReference>
<dbReference type="GO" id="GO:0030649">
    <property type="term" value="P:aminoglycoside antibiotic catabolic process"/>
    <property type="evidence" value="ECO:0007669"/>
    <property type="project" value="TreeGrafter"/>
</dbReference>
<dbReference type="GO" id="GO:0046677">
    <property type="term" value="P:response to antibiotic"/>
    <property type="evidence" value="ECO:0007669"/>
    <property type="project" value="UniProtKB-KW"/>
</dbReference>
<dbReference type="CDD" id="cd04301">
    <property type="entry name" value="NAT_SF"/>
    <property type="match status" value="1"/>
</dbReference>
<dbReference type="FunFam" id="3.30.1050.10:FF:000008">
    <property type="entry name" value="N-acetyltransferase Eis"/>
    <property type="match status" value="1"/>
</dbReference>
<dbReference type="FunFam" id="3.40.630.30:FF:000112">
    <property type="entry name" value="N-acetyltransferase Eis"/>
    <property type="match status" value="1"/>
</dbReference>
<dbReference type="Gene3D" id="3.40.630.30">
    <property type="match status" value="2"/>
</dbReference>
<dbReference type="Gene3D" id="3.30.1050.10">
    <property type="entry name" value="SCP2 sterol-binding domain"/>
    <property type="match status" value="1"/>
</dbReference>
<dbReference type="HAMAP" id="MF_01812">
    <property type="entry name" value="Eis"/>
    <property type="match status" value="1"/>
</dbReference>
<dbReference type="InterPro" id="IPR041380">
    <property type="entry name" value="Acetyltransf_17"/>
</dbReference>
<dbReference type="InterPro" id="IPR051554">
    <property type="entry name" value="Acetyltransferase_Eis"/>
</dbReference>
<dbReference type="InterPro" id="IPR016181">
    <property type="entry name" value="Acyl_CoA_acyltransferase"/>
</dbReference>
<dbReference type="InterPro" id="IPR025559">
    <property type="entry name" value="Eis_dom"/>
</dbReference>
<dbReference type="InterPro" id="IPR000182">
    <property type="entry name" value="GNAT_dom"/>
</dbReference>
<dbReference type="InterPro" id="IPR022902">
    <property type="entry name" value="NAcTrfase_Eis"/>
</dbReference>
<dbReference type="InterPro" id="IPR036527">
    <property type="entry name" value="SCP2_sterol-bd_dom_sf"/>
</dbReference>
<dbReference type="NCBIfam" id="NF002364">
    <property type="entry name" value="PRK01346.1-1"/>
    <property type="match status" value="1"/>
</dbReference>
<dbReference type="NCBIfam" id="NF002367">
    <property type="entry name" value="PRK01346.1-4"/>
    <property type="match status" value="1"/>
</dbReference>
<dbReference type="PANTHER" id="PTHR37817">
    <property type="entry name" value="N-ACETYLTRANSFERASE EIS"/>
    <property type="match status" value="1"/>
</dbReference>
<dbReference type="PANTHER" id="PTHR37817:SF1">
    <property type="entry name" value="N-ACETYLTRANSFERASE EIS"/>
    <property type="match status" value="1"/>
</dbReference>
<dbReference type="Pfam" id="PF17668">
    <property type="entry name" value="Acetyltransf_17"/>
    <property type="match status" value="1"/>
</dbReference>
<dbReference type="Pfam" id="PF13527">
    <property type="entry name" value="Acetyltransf_9"/>
    <property type="match status" value="1"/>
</dbReference>
<dbReference type="Pfam" id="PF13530">
    <property type="entry name" value="SCP2_2"/>
    <property type="match status" value="1"/>
</dbReference>
<dbReference type="SUPFAM" id="SSF55729">
    <property type="entry name" value="Acyl-CoA N-acyltransferases (Nat)"/>
    <property type="match status" value="1"/>
</dbReference>
<dbReference type="SUPFAM" id="SSF55718">
    <property type="entry name" value="SCP-like"/>
    <property type="match status" value="1"/>
</dbReference>
<dbReference type="PROSITE" id="PS51186">
    <property type="entry name" value="GNAT"/>
    <property type="match status" value="1"/>
</dbReference>
<proteinExistence type="inferred from homology"/>
<keyword id="KW-0012">Acyltransferase</keyword>
<keyword id="KW-0046">Antibiotic resistance</keyword>
<keyword id="KW-1036">Host cytoplasmic vesicle</keyword>
<keyword id="KW-1185">Reference proteome</keyword>
<keyword id="KW-0964">Secreted</keyword>
<keyword id="KW-0808">Transferase</keyword>
<gene>
    <name evidence="2" type="primary">eis</name>
    <name type="ordered locus">MT2489</name>
</gene>
<feature type="chain" id="PRO_0000428522" description="N-acetyltransferase Eis">
    <location>
        <begin position="1"/>
        <end position="402"/>
    </location>
</feature>
<feature type="domain" description="N-acetyltransferase">
    <location>
        <begin position="3"/>
        <end position="154"/>
    </location>
</feature>
<feature type="active site" description="Proton donor" evidence="2">
    <location>
        <position position="126"/>
    </location>
</feature>
<feature type="active site" description="Proton acceptor; via carboxylate" evidence="2">
    <location>
        <position position="402"/>
    </location>
</feature>
<feature type="binding site" evidence="2">
    <location>
        <begin position="85"/>
        <end position="87"/>
    </location>
    <ligand>
        <name>acetyl-CoA</name>
        <dbReference type="ChEBI" id="CHEBI:57288"/>
    </ligand>
</feature>
<feature type="binding site" evidence="2">
    <location>
        <begin position="93"/>
        <end position="98"/>
    </location>
    <ligand>
        <name>acetyl-CoA</name>
        <dbReference type="ChEBI" id="CHEBI:57288"/>
    </ligand>
</feature>
<feature type="binding site" evidence="2">
    <location>
        <begin position="121"/>
        <end position="122"/>
    </location>
    <ligand>
        <name>acetyl-CoA</name>
        <dbReference type="ChEBI" id="CHEBI:57288"/>
    </ligand>
</feature>
<sequence length="402" mass="43804">MTVTLCSPTEDDWPGMFLLAAASFTDFIGPESATAWRTLVPTDGAVVVRDGAGPGSEVVGMALYMDLRLTVPGEVVLPTAGLSFVAVAPTHRRRGLLRAMCAELHRRIADSGYPVAALHASEGGIYGRFGYGPATTLHELTVDRRFARFHADAPGGGLGGSSVRLVRPTEHRGEFEAIYERWRQQVPGGLLRPQVLWDELLAECKAAPGGDRESFALLHPDGYALYRVDRTDLKLARVSELRAVTADAHCALWRALIGLDSMERISIITHPQDPLPHLLTDTRLARTTWRQDGLWLRIMNVPAALEARGYAHEVGEFSTVLEVSDGGRFALKIGDGRARCTPTDAAAEIEMDRDVLGSLYLGAHRASTLAAANRLRTKDSQLLRRLDAAFASDVPVQTAFEF</sequence>